<gene>
    <name evidence="1" type="primary">xpt</name>
    <name type="ordered locus">SACOL0458</name>
</gene>
<feature type="chain" id="PRO_0000339742" description="Xanthine phosphoribosyltransferase">
    <location>
        <begin position="1"/>
        <end position="192"/>
    </location>
</feature>
<feature type="binding site" evidence="1">
    <location>
        <position position="20"/>
    </location>
    <ligand>
        <name>xanthine</name>
        <dbReference type="ChEBI" id="CHEBI:17712"/>
    </ligand>
</feature>
<feature type="binding site" evidence="1">
    <location>
        <position position="27"/>
    </location>
    <ligand>
        <name>xanthine</name>
        <dbReference type="ChEBI" id="CHEBI:17712"/>
    </ligand>
</feature>
<feature type="binding site" evidence="1">
    <location>
        <begin position="128"/>
        <end position="132"/>
    </location>
    <ligand>
        <name>5-phospho-alpha-D-ribose 1-diphosphate</name>
        <dbReference type="ChEBI" id="CHEBI:58017"/>
    </ligand>
</feature>
<feature type="binding site" evidence="1">
    <location>
        <position position="156"/>
    </location>
    <ligand>
        <name>xanthine</name>
        <dbReference type="ChEBI" id="CHEBI:17712"/>
    </ligand>
</feature>
<proteinExistence type="inferred from homology"/>
<protein>
    <recommendedName>
        <fullName evidence="1">Xanthine phosphoribosyltransferase</fullName>
        <shortName evidence="1">XPRTase</shortName>
        <ecNumber evidence="1">2.4.2.22</ecNumber>
    </recommendedName>
</protein>
<accession>Q5HIQ9</accession>
<organism>
    <name type="scientific">Staphylococcus aureus (strain COL)</name>
    <dbReference type="NCBI Taxonomy" id="93062"/>
    <lineage>
        <taxon>Bacteria</taxon>
        <taxon>Bacillati</taxon>
        <taxon>Bacillota</taxon>
        <taxon>Bacilli</taxon>
        <taxon>Bacillales</taxon>
        <taxon>Staphylococcaceae</taxon>
        <taxon>Staphylococcus</taxon>
    </lineage>
</organism>
<comment type="function">
    <text evidence="1">Converts the preformed base xanthine, a product of nucleic acid breakdown, to xanthosine 5'-monophosphate (XMP), so it can be reused for RNA or DNA synthesis.</text>
</comment>
<comment type="catalytic activity">
    <reaction evidence="1">
        <text>XMP + diphosphate = xanthine + 5-phospho-alpha-D-ribose 1-diphosphate</text>
        <dbReference type="Rhea" id="RHEA:10800"/>
        <dbReference type="ChEBI" id="CHEBI:17712"/>
        <dbReference type="ChEBI" id="CHEBI:33019"/>
        <dbReference type="ChEBI" id="CHEBI:57464"/>
        <dbReference type="ChEBI" id="CHEBI:58017"/>
        <dbReference type="EC" id="2.4.2.22"/>
    </reaction>
</comment>
<comment type="pathway">
    <text evidence="1">Purine metabolism; XMP biosynthesis via salvage pathway; XMP from xanthine: step 1/1.</text>
</comment>
<comment type="subunit">
    <text evidence="1">Homodimer.</text>
</comment>
<comment type="subcellular location">
    <subcellularLocation>
        <location evidence="1">Cytoplasm</location>
    </subcellularLocation>
</comment>
<comment type="similarity">
    <text evidence="1">Belongs to the purine/pyrimidine phosphoribosyltransferase family. Xpt subfamily.</text>
</comment>
<keyword id="KW-0963">Cytoplasm</keyword>
<keyword id="KW-0328">Glycosyltransferase</keyword>
<keyword id="KW-0660">Purine salvage</keyword>
<keyword id="KW-0808">Transferase</keyword>
<reference key="1">
    <citation type="journal article" date="2005" name="J. Bacteriol.">
        <title>Insights on evolution of virulence and resistance from the complete genome analysis of an early methicillin-resistant Staphylococcus aureus strain and a biofilm-producing methicillin-resistant Staphylococcus epidermidis strain.</title>
        <authorList>
            <person name="Gill S.R."/>
            <person name="Fouts D.E."/>
            <person name="Archer G.L."/>
            <person name="Mongodin E.F."/>
            <person name="DeBoy R.T."/>
            <person name="Ravel J."/>
            <person name="Paulsen I.T."/>
            <person name="Kolonay J.F."/>
            <person name="Brinkac L.M."/>
            <person name="Beanan M.J."/>
            <person name="Dodson R.J."/>
            <person name="Daugherty S.C."/>
            <person name="Madupu R."/>
            <person name="Angiuoli S.V."/>
            <person name="Durkin A.S."/>
            <person name="Haft D.H."/>
            <person name="Vamathevan J.J."/>
            <person name="Khouri H."/>
            <person name="Utterback T.R."/>
            <person name="Lee C."/>
            <person name="Dimitrov G."/>
            <person name="Jiang L."/>
            <person name="Qin H."/>
            <person name="Weidman J."/>
            <person name="Tran K."/>
            <person name="Kang K.H."/>
            <person name="Hance I.R."/>
            <person name="Nelson K.E."/>
            <person name="Fraser C.M."/>
        </authorList>
    </citation>
    <scope>NUCLEOTIDE SEQUENCE [LARGE SCALE GENOMIC DNA]</scope>
    <source>
        <strain>COL</strain>
    </source>
</reference>
<evidence type="ECO:0000255" key="1">
    <source>
        <dbReference type="HAMAP-Rule" id="MF_01184"/>
    </source>
</evidence>
<name>XPT_STAAC</name>
<dbReference type="EC" id="2.4.2.22" evidence="1"/>
<dbReference type="EMBL" id="CP000046">
    <property type="protein sequence ID" value="AAW38925.1"/>
    <property type="molecule type" value="Genomic_DNA"/>
</dbReference>
<dbReference type="RefSeq" id="WP_000421410.1">
    <property type="nucleotide sequence ID" value="NZ_JBGOFO010000001.1"/>
</dbReference>
<dbReference type="SMR" id="Q5HIQ9"/>
<dbReference type="GeneID" id="66838694"/>
<dbReference type="KEGG" id="sac:SACOL0458"/>
<dbReference type="HOGENOM" id="CLU_099015_0_0_9"/>
<dbReference type="UniPathway" id="UPA00602">
    <property type="reaction ID" value="UER00658"/>
</dbReference>
<dbReference type="Proteomes" id="UP000000530">
    <property type="component" value="Chromosome"/>
</dbReference>
<dbReference type="GO" id="GO:0005737">
    <property type="term" value="C:cytoplasm"/>
    <property type="evidence" value="ECO:0007669"/>
    <property type="project" value="UniProtKB-SubCell"/>
</dbReference>
<dbReference type="GO" id="GO:0000310">
    <property type="term" value="F:xanthine phosphoribosyltransferase activity"/>
    <property type="evidence" value="ECO:0007669"/>
    <property type="project" value="UniProtKB-UniRule"/>
</dbReference>
<dbReference type="GO" id="GO:0006166">
    <property type="term" value="P:purine ribonucleoside salvage"/>
    <property type="evidence" value="ECO:0007669"/>
    <property type="project" value="UniProtKB-KW"/>
</dbReference>
<dbReference type="GO" id="GO:0046110">
    <property type="term" value="P:xanthine metabolic process"/>
    <property type="evidence" value="ECO:0007669"/>
    <property type="project" value="InterPro"/>
</dbReference>
<dbReference type="GO" id="GO:0032265">
    <property type="term" value="P:XMP salvage"/>
    <property type="evidence" value="ECO:0007669"/>
    <property type="project" value="UniProtKB-UniRule"/>
</dbReference>
<dbReference type="CDD" id="cd06223">
    <property type="entry name" value="PRTases_typeI"/>
    <property type="match status" value="1"/>
</dbReference>
<dbReference type="Gene3D" id="3.40.50.2020">
    <property type="match status" value="1"/>
</dbReference>
<dbReference type="HAMAP" id="MF_01184">
    <property type="entry name" value="XPRTase"/>
    <property type="match status" value="1"/>
</dbReference>
<dbReference type="InterPro" id="IPR000836">
    <property type="entry name" value="PRibTrfase_dom"/>
</dbReference>
<dbReference type="InterPro" id="IPR029057">
    <property type="entry name" value="PRTase-like"/>
</dbReference>
<dbReference type="InterPro" id="IPR050118">
    <property type="entry name" value="Pur/Pyrimidine_PRTase"/>
</dbReference>
<dbReference type="InterPro" id="IPR010079">
    <property type="entry name" value="Xanthine_PRibTrfase"/>
</dbReference>
<dbReference type="NCBIfam" id="NF006671">
    <property type="entry name" value="PRK09219.1"/>
    <property type="match status" value="1"/>
</dbReference>
<dbReference type="NCBIfam" id="TIGR01744">
    <property type="entry name" value="XPRTase"/>
    <property type="match status" value="1"/>
</dbReference>
<dbReference type="PANTHER" id="PTHR43864">
    <property type="entry name" value="HYPOXANTHINE/GUANINE PHOSPHORIBOSYLTRANSFERASE"/>
    <property type="match status" value="1"/>
</dbReference>
<dbReference type="PANTHER" id="PTHR43864:SF1">
    <property type="entry name" value="XANTHINE PHOSPHORIBOSYLTRANSFERASE"/>
    <property type="match status" value="1"/>
</dbReference>
<dbReference type="SUPFAM" id="SSF53271">
    <property type="entry name" value="PRTase-like"/>
    <property type="match status" value="1"/>
</dbReference>
<sequence length="192" mass="20884">MELLGQKVKEDGVVIDEKILKVDGFLNHQIDAKLMNEVGRTFYEQFKDKGITKILTIEASGIAPAIMAALHFDVPCLFAKKAKPSTLTDGYYETSIHSFTKNKTSTVIVSKEFLSEEDTVLIIDDFLANGDASLGLYDIAQQANAKTAGIGIVVEKSFQNGHQRLEEAGLTVSSLCKVASLEGNKVTLVGEE</sequence>